<protein>
    <recommendedName>
        <fullName evidence="1">RNA-binding protein Hfq</fullName>
    </recommendedName>
</protein>
<keyword id="KW-1185">Reference proteome</keyword>
<keyword id="KW-0694">RNA-binding</keyword>
<keyword id="KW-0346">Stress response</keyword>
<name>HFQ_RUMCH</name>
<sequence length="80" mass="9097">MVKNTINLQDIFLNQVRKEHIAVTIYLTNGFQLKGLVKGFDNFTVVLDTDGKQQLVYKHAISTISPMKSVNLIFNEQGKE</sequence>
<proteinExistence type="inferred from homology"/>
<organism>
    <name type="scientific">Ruminiclostridium cellulolyticum (strain ATCC 35319 / DSM 5812 / JCM 6584 / H10)</name>
    <name type="common">Clostridium cellulolyticum</name>
    <dbReference type="NCBI Taxonomy" id="394503"/>
    <lineage>
        <taxon>Bacteria</taxon>
        <taxon>Bacillati</taxon>
        <taxon>Bacillota</taxon>
        <taxon>Clostridia</taxon>
        <taxon>Eubacteriales</taxon>
        <taxon>Oscillospiraceae</taxon>
        <taxon>Ruminiclostridium</taxon>
    </lineage>
</organism>
<dbReference type="EMBL" id="CP001348">
    <property type="protein sequence ID" value="ACL76045.1"/>
    <property type="molecule type" value="Genomic_DNA"/>
</dbReference>
<dbReference type="RefSeq" id="WP_015925160.1">
    <property type="nucleotide sequence ID" value="NC_011898.1"/>
</dbReference>
<dbReference type="SMR" id="B8I2Q2"/>
<dbReference type="STRING" id="394503.Ccel_1694"/>
<dbReference type="KEGG" id="cce:Ccel_1694"/>
<dbReference type="eggNOG" id="COG1923">
    <property type="taxonomic scope" value="Bacteria"/>
</dbReference>
<dbReference type="HOGENOM" id="CLU_113688_0_2_9"/>
<dbReference type="OrthoDB" id="9799751at2"/>
<dbReference type="Proteomes" id="UP000001349">
    <property type="component" value="Chromosome"/>
</dbReference>
<dbReference type="GO" id="GO:0005829">
    <property type="term" value="C:cytosol"/>
    <property type="evidence" value="ECO:0007669"/>
    <property type="project" value="TreeGrafter"/>
</dbReference>
<dbReference type="GO" id="GO:0003723">
    <property type="term" value="F:RNA binding"/>
    <property type="evidence" value="ECO:0007669"/>
    <property type="project" value="UniProtKB-UniRule"/>
</dbReference>
<dbReference type="GO" id="GO:0006355">
    <property type="term" value="P:regulation of DNA-templated transcription"/>
    <property type="evidence" value="ECO:0007669"/>
    <property type="project" value="InterPro"/>
</dbReference>
<dbReference type="GO" id="GO:0043487">
    <property type="term" value="P:regulation of RNA stability"/>
    <property type="evidence" value="ECO:0007669"/>
    <property type="project" value="TreeGrafter"/>
</dbReference>
<dbReference type="GO" id="GO:0045974">
    <property type="term" value="P:regulation of translation, ncRNA-mediated"/>
    <property type="evidence" value="ECO:0007669"/>
    <property type="project" value="TreeGrafter"/>
</dbReference>
<dbReference type="CDD" id="cd01716">
    <property type="entry name" value="Hfq"/>
    <property type="match status" value="1"/>
</dbReference>
<dbReference type="FunFam" id="2.30.30.100:FF:000012">
    <property type="entry name" value="RNA-binding protein Hfq"/>
    <property type="match status" value="1"/>
</dbReference>
<dbReference type="Gene3D" id="2.30.30.100">
    <property type="match status" value="1"/>
</dbReference>
<dbReference type="HAMAP" id="MF_00436">
    <property type="entry name" value="Hfq"/>
    <property type="match status" value="1"/>
</dbReference>
<dbReference type="InterPro" id="IPR005001">
    <property type="entry name" value="Hfq"/>
</dbReference>
<dbReference type="InterPro" id="IPR010920">
    <property type="entry name" value="LSM_dom_sf"/>
</dbReference>
<dbReference type="InterPro" id="IPR047575">
    <property type="entry name" value="Sm"/>
</dbReference>
<dbReference type="NCBIfam" id="TIGR02383">
    <property type="entry name" value="Hfq"/>
    <property type="match status" value="1"/>
</dbReference>
<dbReference type="NCBIfam" id="NF001602">
    <property type="entry name" value="PRK00395.1"/>
    <property type="match status" value="1"/>
</dbReference>
<dbReference type="PANTHER" id="PTHR34772">
    <property type="entry name" value="RNA-BINDING PROTEIN HFQ"/>
    <property type="match status" value="1"/>
</dbReference>
<dbReference type="PANTHER" id="PTHR34772:SF1">
    <property type="entry name" value="RNA-BINDING PROTEIN HFQ"/>
    <property type="match status" value="1"/>
</dbReference>
<dbReference type="Pfam" id="PF17209">
    <property type="entry name" value="Hfq"/>
    <property type="match status" value="1"/>
</dbReference>
<dbReference type="SUPFAM" id="SSF50182">
    <property type="entry name" value="Sm-like ribonucleoproteins"/>
    <property type="match status" value="1"/>
</dbReference>
<dbReference type="PROSITE" id="PS52002">
    <property type="entry name" value="SM"/>
    <property type="match status" value="1"/>
</dbReference>
<comment type="function">
    <text evidence="1">RNA chaperone that binds small regulatory RNA (sRNAs) and mRNAs to facilitate mRNA translational regulation in response to envelope stress, environmental stress and changes in metabolite concentrations. Also binds with high specificity to tRNAs.</text>
</comment>
<comment type="subunit">
    <text evidence="1">Homohexamer.</text>
</comment>
<comment type="similarity">
    <text evidence="1">Belongs to the Hfq family.</text>
</comment>
<evidence type="ECO:0000255" key="1">
    <source>
        <dbReference type="HAMAP-Rule" id="MF_00436"/>
    </source>
</evidence>
<evidence type="ECO:0000255" key="2">
    <source>
        <dbReference type="PROSITE-ProRule" id="PRU01346"/>
    </source>
</evidence>
<feature type="chain" id="PRO_1000135027" description="RNA-binding protein Hfq">
    <location>
        <begin position="1"/>
        <end position="80"/>
    </location>
</feature>
<feature type="domain" description="Sm" evidence="2">
    <location>
        <begin position="10"/>
        <end position="70"/>
    </location>
</feature>
<gene>
    <name evidence="1" type="primary">hfq</name>
    <name type="ordered locus">Ccel_1694</name>
</gene>
<accession>B8I2Q2</accession>
<reference key="1">
    <citation type="submission" date="2009-01" db="EMBL/GenBank/DDBJ databases">
        <title>Complete sequence of Clostridium cellulolyticum H10.</title>
        <authorList>
            <consortium name="US DOE Joint Genome Institute"/>
            <person name="Lucas S."/>
            <person name="Copeland A."/>
            <person name="Lapidus A."/>
            <person name="Glavina del Rio T."/>
            <person name="Dalin E."/>
            <person name="Tice H."/>
            <person name="Bruce D."/>
            <person name="Goodwin L."/>
            <person name="Pitluck S."/>
            <person name="Chertkov O."/>
            <person name="Saunders E."/>
            <person name="Brettin T."/>
            <person name="Detter J.C."/>
            <person name="Han C."/>
            <person name="Larimer F."/>
            <person name="Land M."/>
            <person name="Hauser L."/>
            <person name="Kyrpides N."/>
            <person name="Ivanova N."/>
            <person name="Zhou J."/>
            <person name="Richardson P."/>
        </authorList>
    </citation>
    <scope>NUCLEOTIDE SEQUENCE [LARGE SCALE GENOMIC DNA]</scope>
    <source>
        <strain>ATCC 35319 / DSM 5812 / JCM 6584 / H10</strain>
    </source>
</reference>